<proteinExistence type="inferred from homology"/>
<sequence>MSELSFDAPVWRHGKALRKGYTTGSCATAAAKVAALMVLRQHLIHQVSIVTPSGVTLCLNVESPHIEGQQAIAAIRKDGGDDVDATHGMLIFARVTLNDSGEITLTGGEGIGTVTRKGVGLPLGSAAINRTPRHTIESAVREAIGPARGADVEIFAPEGEVRAQKTYNSRLGILGGISIIGTTGIVTPMSEESWKRSLSLELEIKRASGLTRVILVPGNHGERFVREQMGVDTQAVVTMSNFVGYMIEEAVRLGFCQIVLVGHPGKLIKIAAGIFHTHSHIADARMETLVAHLALLGAPLELLTLVGDCDTTEAAMEHIEAYGFGHIYNHLARRICLRVMQMRRFTKTPPVCDAILFSFDNHILGSNRPVDEIAKELQC</sequence>
<protein>
    <recommendedName>
        <fullName evidence="1">Cobalt-precorrin-5B C(1)-methyltransferase</fullName>
        <ecNumber evidence="1">2.1.1.195</ecNumber>
    </recommendedName>
    <alternativeName>
        <fullName evidence="1">Cobalt-precorrin-6A synthase</fullName>
    </alternativeName>
</protein>
<name>CBID_SALPK</name>
<feature type="chain" id="PRO_1000133747" description="Cobalt-precorrin-5B C(1)-methyltransferase">
    <location>
        <begin position="1"/>
        <end position="379"/>
    </location>
</feature>
<reference key="1">
    <citation type="journal article" date="2009" name="BMC Genomics">
        <title>Pseudogene accumulation in the evolutionary histories of Salmonella enterica serovars Paratyphi A and Typhi.</title>
        <authorList>
            <person name="Holt K.E."/>
            <person name="Thomson N.R."/>
            <person name="Wain J."/>
            <person name="Langridge G.C."/>
            <person name="Hasan R."/>
            <person name="Bhutta Z.A."/>
            <person name="Quail M.A."/>
            <person name="Norbertczak H."/>
            <person name="Walker D."/>
            <person name="Simmonds M."/>
            <person name="White B."/>
            <person name="Bason N."/>
            <person name="Mungall K."/>
            <person name="Dougan G."/>
            <person name="Parkhill J."/>
        </authorList>
    </citation>
    <scope>NUCLEOTIDE SEQUENCE [LARGE SCALE GENOMIC DNA]</scope>
    <source>
        <strain>AKU_12601</strain>
    </source>
</reference>
<organism>
    <name type="scientific">Salmonella paratyphi A (strain AKU_12601)</name>
    <dbReference type="NCBI Taxonomy" id="554290"/>
    <lineage>
        <taxon>Bacteria</taxon>
        <taxon>Pseudomonadati</taxon>
        <taxon>Pseudomonadota</taxon>
        <taxon>Gammaproteobacteria</taxon>
        <taxon>Enterobacterales</taxon>
        <taxon>Enterobacteriaceae</taxon>
        <taxon>Salmonella</taxon>
    </lineage>
</organism>
<dbReference type="EC" id="2.1.1.195" evidence="1"/>
<dbReference type="EMBL" id="FM200053">
    <property type="protein sequence ID" value="CAR58925.1"/>
    <property type="molecule type" value="Genomic_DNA"/>
</dbReference>
<dbReference type="RefSeq" id="WP_001292919.1">
    <property type="nucleotide sequence ID" value="NC_011147.1"/>
</dbReference>
<dbReference type="SMR" id="B5BG44"/>
<dbReference type="KEGG" id="sek:SSPA0784"/>
<dbReference type="HOGENOM" id="CLU_041273_1_0_6"/>
<dbReference type="UniPathway" id="UPA00148">
    <property type="reaction ID" value="UER00227"/>
</dbReference>
<dbReference type="Proteomes" id="UP000001869">
    <property type="component" value="Chromosome"/>
</dbReference>
<dbReference type="GO" id="GO:0043780">
    <property type="term" value="F:cobalt-precorrin-5B C1-methyltransferase activity"/>
    <property type="evidence" value="ECO:0007669"/>
    <property type="project" value="RHEA"/>
</dbReference>
<dbReference type="GO" id="GO:0019251">
    <property type="term" value="P:anaerobic cobalamin biosynthetic process"/>
    <property type="evidence" value="ECO:0007669"/>
    <property type="project" value="UniProtKB-UniRule"/>
</dbReference>
<dbReference type="GO" id="GO:0032259">
    <property type="term" value="P:methylation"/>
    <property type="evidence" value="ECO:0007669"/>
    <property type="project" value="UniProtKB-KW"/>
</dbReference>
<dbReference type="Gene3D" id="3.30.2110.10">
    <property type="entry name" value="CbiD-like"/>
    <property type="match status" value="1"/>
</dbReference>
<dbReference type="HAMAP" id="MF_00787">
    <property type="entry name" value="CbiD"/>
    <property type="match status" value="1"/>
</dbReference>
<dbReference type="InterPro" id="IPR002748">
    <property type="entry name" value="CbiD"/>
</dbReference>
<dbReference type="InterPro" id="IPR036074">
    <property type="entry name" value="CbiD_sf"/>
</dbReference>
<dbReference type="NCBIfam" id="TIGR00312">
    <property type="entry name" value="cbiD"/>
    <property type="match status" value="1"/>
</dbReference>
<dbReference type="PANTHER" id="PTHR35863">
    <property type="entry name" value="COBALT-PRECORRIN-5B C(1)-METHYLTRANSFERASE"/>
    <property type="match status" value="1"/>
</dbReference>
<dbReference type="PANTHER" id="PTHR35863:SF1">
    <property type="entry name" value="COBALT-PRECORRIN-5B C(1)-METHYLTRANSFERASE"/>
    <property type="match status" value="1"/>
</dbReference>
<dbReference type="Pfam" id="PF01888">
    <property type="entry name" value="CbiD"/>
    <property type="match status" value="1"/>
</dbReference>
<dbReference type="PIRSF" id="PIRSF026782">
    <property type="entry name" value="CbiD"/>
    <property type="match status" value="1"/>
</dbReference>
<dbReference type="SUPFAM" id="SSF111342">
    <property type="entry name" value="CbiD-like"/>
    <property type="match status" value="1"/>
</dbReference>
<evidence type="ECO:0000255" key="1">
    <source>
        <dbReference type="HAMAP-Rule" id="MF_00787"/>
    </source>
</evidence>
<accession>B5BG44</accession>
<comment type="function">
    <text evidence="1">Catalyzes the methylation of C-1 in cobalt-precorrin-5B to form cobalt-precorrin-6A.</text>
</comment>
<comment type="catalytic activity">
    <reaction evidence="1">
        <text>Co-precorrin-5B + S-adenosyl-L-methionine = Co-precorrin-6A + S-adenosyl-L-homocysteine</text>
        <dbReference type="Rhea" id="RHEA:26285"/>
        <dbReference type="ChEBI" id="CHEBI:57856"/>
        <dbReference type="ChEBI" id="CHEBI:59789"/>
        <dbReference type="ChEBI" id="CHEBI:60063"/>
        <dbReference type="ChEBI" id="CHEBI:60064"/>
        <dbReference type="EC" id="2.1.1.195"/>
    </reaction>
</comment>
<comment type="pathway">
    <text evidence="1">Cofactor biosynthesis; adenosylcobalamin biosynthesis; cob(II)yrinate a,c-diamide from sirohydrochlorin (anaerobic route): step 6/10.</text>
</comment>
<comment type="similarity">
    <text evidence="1">Belongs to the CbiD family.</text>
</comment>
<keyword id="KW-0169">Cobalamin biosynthesis</keyword>
<keyword id="KW-0489">Methyltransferase</keyword>
<keyword id="KW-0949">S-adenosyl-L-methionine</keyword>
<keyword id="KW-0808">Transferase</keyword>
<gene>
    <name evidence="1" type="primary">cbiD</name>
    <name type="ordered locus">SSPA0784</name>
</gene>